<keyword id="KW-0378">Hydrolase</keyword>
<gene>
    <name evidence="1" type="primary">rppH</name>
    <name evidence="1" type="synonym">nudH</name>
    <name type="ordered locus">EFER_2763</name>
</gene>
<comment type="function">
    <text evidence="1">Accelerates the degradation of transcripts by removing pyrophosphate from the 5'-end of triphosphorylated RNA, leading to a more labile monophosphorylated state that can stimulate subsequent ribonuclease cleavage.</text>
</comment>
<comment type="cofactor">
    <cofactor evidence="1">
        <name>a divalent metal cation</name>
        <dbReference type="ChEBI" id="CHEBI:60240"/>
    </cofactor>
</comment>
<comment type="similarity">
    <text evidence="1">Belongs to the Nudix hydrolase family. RppH subfamily.</text>
</comment>
<name>RPPH_ESCF3</name>
<feature type="chain" id="PRO_1000119475" description="RNA pyrophosphohydrolase">
    <location>
        <begin position="1"/>
        <end position="176"/>
    </location>
</feature>
<feature type="domain" description="Nudix hydrolase" evidence="1">
    <location>
        <begin position="6"/>
        <end position="149"/>
    </location>
</feature>
<feature type="short sequence motif" description="Nudix box">
    <location>
        <begin position="38"/>
        <end position="59"/>
    </location>
</feature>
<reference key="1">
    <citation type="journal article" date="2009" name="PLoS Genet.">
        <title>Organised genome dynamics in the Escherichia coli species results in highly diverse adaptive paths.</title>
        <authorList>
            <person name="Touchon M."/>
            <person name="Hoede C."/>
            <person name="Tenaillon O."/>
            <person name="Barbe V."/>
            <person name="Baeriswyl S."/>
            <person name="Bidet P."/>
            <person name="Bingen E."/>
            <person name="Bonacorsi S."/>
            <person name="Bouchier C."/>
            <person name="Bouvet O."/>
            <person name="Calteau A."/>
            <person name="Chiapello H."/>
            <person name="Clermont O."/>
            <person name="Cruveiller S."/>
            <person name="Danchin A."/>
            <person name="Diard M."/>
            <person name="Dossat C."/>
            <person name="Karoui M.E."/>
            <person name="Frapy E."/>
            <person name="Garry L."/>
            <person name="Ghigo J.M."/>
            <person name="Gilles A.M."/>
            <person name="Johnson J."/>
            <person name="Le Bouguenec C."/>
            <person name="Lescat M."/>
            <person name="Mangenot S."/>
            <person name="Martinez-Jehanne V."/>
            <person name="Matic I."/>
            <person name="Nassif X."/>
            <person name="Oztas S."/>
            <person name="Petit M.A."/>
            <person name="Pichon C."/>
            <person name="Rouy Z."/>
            <person name="Ruf C.S."/>
            <person name="Schneider D."/>
            <person name="Tourret J."/>
            <person name="Vacherie B."/>
            <person name="Vallenet D."/>
            <person name="Medigue C."/>
            <person name="Rocha E.P.C."/>
            <person name="Denamur E."/>
        </authorList>
    </citation>
    <scope>NUCLEOTIDE SEQUENCE [LARGE SCALE GENOMIC DNA]</scope>
    <source>
        <strain>ATCC 35469 / DSM 13698 / BCRC 15582 / CCUG 18766 / IAM 14443 / JCM 21226 / LMG 7866 / NBRC 102419 / NCTC 12128 / CDC 0568-73</strain>
    </source>
</reference>
<proteinExistence type="inferred from homology"/>
<dbReference type="EC" id="3.6.1.-" evidence="1"/>
<dbReference type="EMBL" id="CU928158">
    <property type="protein sequence ID" value="CAQ90258.1"/>
    <property type="molecule type" value="Genomic_DNA"/>
</dbReference>
<dbReference type="RefSeq" id="WP_000564492.1">
    <property type="nucleotide sequence ID" value="NC_011740.1"/>
</dbReference>
<dbReference type="SMR" id="B7LNI5"/>
<dbReference type="GeneID" id="75056200"/>
<dbReference type="KEGG" id="efe:EFER_2763"/>
<dbReference type="HOGENOM" id="CLU_087195_3_2_6"/>
<dbReference type="OrthoDB" id="9816040at2"/>
<dbReference type="Proteomes" id="UP000000745">
    <property type="component" value="Chromosome"/>
</dbReference>
<dbReference type="GO" id="GO:0005737">
    <property type="term" value="C:cytoplasm"/>
    <property type="evidence" value="ECO:0007669"/>
    <property type="project" value="TreeGrafter"/>
</dbReference>
<dbReference type="GO" id="GO:0034353">
    <property type="term" value="F:mRNA 5'-diphosphatase activity"/>
    <property type="evidence" value="ECO:0007669"/>
    <property type="project" value="TreeGrafter"/>
</dbReference>
<dbReference type="GO" id="GO:0006402">
    <property type="term" value="P:mRNA catabolic process"/>
    <property type="evidence" value="ECO:0007669"/>
    <property type="project" value="TreeGrafter"/>
</dbReference>
<dbReference type="CDD" id="cd03671">
    <property type="entry name" value="NUDIX_Ap4A_hydrolase_plant_like"/>
    <property type="match status" value="1"/>
</dbReference>
<dbReference type="FunFam" id="3.90.79.10:FF:000001">
    <property type="entry name" value="RNA pyrophosphohydrolase"/>
    <property type="match status" value="1"/>
</dbReference>
<dbReference type="Gene3D" id="3.90.79.10">
    <property type="entry name" value="Nucleoside Triphosphate Pyrophosphohydrolase"/>
    <property type="match status" value="1"/>
</dbReference>
<dbReference type="HAMAP" id="MF_00298">
    <property type="entry name" value="Nudix_RppH"/>
    <property type="match status" value="1"/>
</dbReference>
<dbReference type="InterPro" id="IPR020476">
    <property type="entry name" value="Nudix_hydrolase"/>
</dbReference>
<dbReference type="InterPro" id="IPR015797">
    <property type="entry name" value="NUDIX_hydrolase-like_dom_sf"/>
</dbReference>
<dbReference type="InterPro" id="IPR020084">
    <property type="entry name" value="NUDIX_hydrolase_CS"/>
</dbReference>
<dbReference type="InterPro" id="IPR000086">
    <property type="entry name" value="NUDIX_hydrolase_dom"/>
</dbReference>
<dbReference type="InterPro" id="IPR022927">
    <property type="entry name" value="RppH"/>
</dbReference>
<dbReference type="NCBIfam" id="NF001934">
    <property type="entry name" value="PRK00714.1-1"/>
    <property type="match status" value="1"/>
</dbReference>
<dbReference type="NCBIfam" id="NF001937">
    <property type="entry name" value="PRK00714.1-4"/>
    <property type="match status" value="1"/>
</dbReference>
<dbReference type="NCBIfam" id="NF001938">
    <property type="entry name" value="PRK00714.1-5"/>
    <property type="match status" value="1"/>
</dbReference>
<dbReference type="PANTHER" id="PTHR23114">
    <property type="entry name" value="M7GPPPN-MRNA HYDROLASE"/>
    <property type="match status" value="1"/>
</dbReference>
<dbReference type="PANTHER" id="PTHR23114:SF17">
    <property type="entry name" value="M7GPPPN-MRNA HYDROLASE"/>
    <property type="match status" value="1"/>
</dbReference>
<dbReference type="Pfam" id="PF00293">
    <property type="entry name" value="NUDIX"/>
    <property type="match status" value="1"/>
</dbReference>
<dbReference type="PRINTS" id="PR00502">
    <property type="entry name" value="NUDIXFAMILY"/>
</dbReference>
<dbReference type="SUPFAM" id="SSF55811">
    <property type="entry name" value="Nudix"/>
    <property type="match status" value="1"/>
</dbReference>
<dbReference type="PROSITE" id="PS51462">
    <property type="entry name" value="NUDIX"/>
    <property type="match status" value="1"/>
</dbReference>
<dbReference type="PROSITE" id="PS00893">
    <property type="entry name" value="NUDIX_BOX"/>
    <property type="match status" value="1"/>
</dbReference>
<evidence type="ECO:0000255" key="1">
    <source>
        <dbReference type="HAMAP-Rule" id="MF_00298"/>
    </source>
</evidence>
<organism>
    <name type="scientific">Escherichia fergusonii (strain ATCC 35469 / DSM 13698 / CCUG 18766 / IAM 14443 / JCM 21226 / LMG 7866 / NBRC 102419 / NCTC 12128 / CDC 0568-73)</name>
    <dbReference type="NCBI Taxonomy" id="585054"/>
    <lineage>
        <taxon>Bacteria</taxon>
        <taxon>Pseudomonadati</taxon>
        <taxon>Pseudomonadota</taxon>
        <taxon>Gammaproteobacteria</taxon>
        <taxon>Enterobacterales</taxon>
        <taxon>Enterobacteriaceae</taxon>
        <taxon>Escherichia</taxon>
    </lineage>
</organism>
<sequence>MIDDDGYRPNVGIVICNRQGQVMWARRYGQHSWQFPQGGINPGESAEQAMYRELFEEVGLSRKDVRILASTRNWLRYKLPKRLVRWDTKPVCIGQKQKWFLLQLMSADAEINMQTSSTPEFDGWRWVSYWYPVRQVVSFKRDVYRRVMKEFASVVMALQDNTPKPQNSPAYRRKRG</sequence>
<protein>
    <recommendedName>
        <fullName evidence="1">RNA pyrophosphohydrolase</fullName>
        <ecNumber evidence="1">3.6.1.-</ecNumber>
    </recommendedName>
    <alternativeName>
        <fullName evidence="1">(Di)nucleoside polyphosphate hydrolase</fullName>
    </alternativeName>
</protein>
<accession>B7LNI5</accession>